<name>TSAD_WOLPM</name>
<keyword id="KW-0012">Acyltransferase</keyword>
<keyword id="KW-0963">Cytoplasm</keyword>
<keyword id="KW-0408">Iron</keyword>
<keyword id="KW-0479">Metal-binding</keyword>
<keyword id="KW-0808">Transferase</keyword>
<keyword id="KW-0819">tRNA processing</keyword>
<dbReference type="EC" id="2.3.1.234" evidence="1"/>
<dbReference type="EMBL" id="AE017196">
    <property type="protein sequence ID" value="AAS14395.1"/>
    <property type="molecule type" value="Genomic_DNA"/>
</dbReference>
<dbReference type="RefSeq" id="WP_010962772.1">
    <property type="nucleotide sequence ID" value="NZ_OX384529.1"/>
</dbReference>
<dbReference type="SMR" id="Q73H71"/>
<dbReference type="EnsemblBacteria" id="AAS14395">
    <property type="protein sequence ID" value="AAS14395"/>
    <property type="gene ID" value="WD_0699"/>
</dbReference>
<dbReference type="GeneID" id="70036184"/>
<dbReference type="KEGG" id="wol:WD_0699"/>
<dbReference type="eggNOG" id="COG0533">
    <property type="taxonomic scope" value="Bacteria"/>
</dbReference>
<dbReference type="Proteomes" id="UP000008215">
    <property type="component" value="Chromosome"/>
</dbReference>
<dbReference type="GO" id="GO:0005737">
    <property type="term" value="C:cytoplasm"/>
    <property type="evidence" value="ECO:0007669"/>
    <property type="project" value="UniProtKB-SubCell"/>
</dbReference>
<dbReference type="GO" id="GO:0005506">
    <property type="term" value="F:iron ion binding"/>
    <property type="evidence" value="ECO:0007669"/>
    <property type="project" value="UniProtKB-UniRule"/>
</dbReference>
<dbReference type="GO" id="GO:0061711">
    <property type="term" value="F:N(6)-L-threonylcarbamoyladenine synthase activity"/>
    <property type="evidence" value="ECO:0007669"/>
    <property type="project" value="UniProtKB-EC"/>
</dbReference>
<dbReference type="GO" id="GO:0002949">
    <property type="term" value="P:tRNA threonylcarbamoyladenosine modification"/>
    <property type="evidence" value="ECO:0007669"/>
    <property type="project" value="UniProtKB-UniRule"/>
</dbReference>
<dbReference type="CDD" id="cd24133">
    <property type="entry name" value="ASKHA_NBD_TsaD_bac"/>
    <property type="match status" value="1"/>
</dbReference>
<dbReference type="FunFam" id="3.30.420.40:FF:000012">
    <property type="entry name" value="tRNA N6-adenosine threonylcarbamoyltransferase"/>
    <property type="match status" value="1"/>
</dbReference>
<dbReference type="FunFam" id="3.30.420.40:FF:000040">
    <property type="entry name" value="tRNA N6-adenosine threonylcarbamoyltransferase"/>
    <property type="match status" value="1"/>
</dbReference>
<dbReference type="Gene3D" id="3.30.420.40">
    <property type="match status" value="2"/>
</dbReference>
<dbReference type="HAMAP" id="MF_01445">
    <property type="entry name" value="TsaD"/>
    <property type="match status" value="1"/>
</dbReference>
<dbReference type="InterPro" id="IPR043129">
    <property type="entry name" value="ATPase_NBD"/>
</dbReference>
<dbReference type="InterPro" id="IPR000905">
    <property type="entry name" value="Gcp-like_dom"/>
</dbReference>
<dbReference type="InterPro" id="IPR017861">
    <property type="entry name" value="KAE1/TsaD"/>
</dbReference>
<dbReference type="InterPro" id="IPR022450">
    <property type="entry name" value="TsaD"/>
</dbReference>
<dbReference type="NCBIfam" id="TIGR00329">
    <property type="entry name" value="gcp_kae1"/>
    <property type="match status" value="1"/>
</dbReference>
<dbReference type="NCBIfam" id="TIGR03723">
    <property type="entry name" value="T6A_TsaD_YgjD"/>
    <property type="match status" value="1"/>
</dbReference>
<dbReference type="PANTHER" id="PTHR11735">
    <property type="entry name" value="TRNA N6-ADENOSINE THREONYLCARBAMOYLTRANSFERASE"/>
    <property type="match status" value="1"/>
</dbReference>
<dbReference type="PANTHER" id="PTHR11735:SF6">
    <property type="entry name" value="TRNA N6-ADENOSINE THREONYLCARBAMOYLTRANSFERASE, MITOCHONDRIAL"/>
    <property type="match status" value="1"/>
</dbReference>
<dbReference type="Pfam" id="PF00814">
    <property type="entry name" value="TsaD"/>
    <property type="match status" value="1"/>
</dbReference>
<dbReference type="PRINTS" id="PR00789">
    <property type="entry name" value="OSIALOPTASE"/>
</dbReference>
<dbReference type="SUPFAM" id="SSF53067">
    <property type="entry name" value="Actin-like ATPase domain"/>
    <property type="match status" value="1"/>
</dbReference>
<reference key="1">
    <citation type="journal article" date="2004" name="PLoS Biol.">
        <title>Phylogenomics of the reproductive parasite Wolbachia pipientis wMel: a streamlined genome overrun by mobile genetic elements.</title>
        <authorList>
            <person name="Wu M."/>
            <person name="Sun L.V."/>
            <person name="Vamathevan J.J."/>
            <person name="Riegler M."/>
            <person name="DeBoy R.T."/>
            <person name="Brownlie J.C."/>
            <person name="McGraw E.A."/>
            <person name="Martin W."/>
            <person name="Esser C."/>
            <person name="Ahmadinejad N."/>
            <person name="Wiegand C."/>
            <person name="Madupu R."/>
            <person name="Beanan M.J."/>
            <person name="Brinkac L.M."/>
            <person name="Daugherty S.C."/>
            <person name="Durkin A.S."/>
            <person name="Kolonay J.F."/>
            <person name="Nelson W.C."/>
            <person name="Mohamoud Y."/>
            <person name="Lee P."/>
            <person name="Berry K.J."/>
            <person name="Young M.B."/>
            <person name="Utterback T.R."/>
            <person name="Weidman J.F."/>
            <person name="Nierman W.C."/>
            <person name="Paulsen I.T."/>
            <person name="Nelson K.E."/>
            <person name="Tettelin H."/>
            <person name="O'Neill S.L."/>
            <person name="Eisen J.A."/>
        </authorList>
    </citation>
    <scope>NUCLEOTIDE SEQUENCE [LARGE SCALE GENOMIC DNA]</scope>
</reference>
<comment type="function">
    <text evidence="1">Required for the formation of a threonylcarbamoyl group on adenosine at position 37 (t(6)A37) in tRNAs that read codons beginning with adenine. Is involved in the transfer of the threonylcarbamoyl moiety of threonylcarbamoyl-AMP (TC-AMP) to the N6 group of A37, together with TsaE and TsaB. TsaD likely plays a direct catalytic role in this reaction.</text>
</comment>
<comment type="catalytic activity">
    <reaction evidence="1">
        <text>L-threonylcarbamoyladenylate + adenosine(37) in tRNA = N(6)-L-threonylcarbamoyladenosine(37) in tRNA + AMP + H(+)</text>
        <dbReference type="Rhea" id="RHEA:37059"/>
        <dbReference type="Rhea" id="RHEA-COMP:10162"/>
        <dbReference type="Rhea" id="RHEA-COMP:10163"/>
        <dbReference type="ChEBI" id="CHEBI:15378"/>
        <dbReference type="ChEBI" id="CHEBI:73682"/>
        <dbReference type="ChEBI" id="CHEBI:74411"/>
        <dbReference type="ChEBI" id="CHEBI:74418"/>
        <dbReference type="ChEBI" id="CHEBI:456215"/>
        <dbReference type="EC" id="2.3.1.234"/>
    </reaction>
</comment>
<comment type="cofactor">
    <cofactor evidence="1">
        <name>Fe(2+)</name>
        <dbReference type="ChEBI" id="CHEBI:29033"/>
    </cofactor>
    <text evidence="1">Binds 1 Fe(2+) ion per subunit.</text>
</comment>
<comment type="subcellular location">
    <subcellularLocation>
        <location evidence="1">Cytoplasm</location>
    </subcellularLocation>
</comment>
<comment type="similarity">
    <text evidence="1">Belongs to the KAE1 / TsaD family.</text>
</comment>
<sequence>MKTILAVETSCDETAVAIVNSDKQVLAHEILSQAEHKKRGGVIPEIASRAHMEHLSGLIKSAVEKSNLNFCDLNAIAATSGPGLIGGLIVGTMMAKAIAHVAQKPFIAVNHLEAHALVIRLLHEVKFPFLVLLISGGHCQFLIAQDVGKYIKLGETLDDSLGEAFDKVAKMLGLSYPGGPLIEKLAKKGNGTRFKLPRAMIKRSGCNFSFSGIKTAVKNLVQELKMSEQDVCDVCASFQECISDILLDRVSNAIIMAESLNIKINDFVITGGVAANNFLREKLKQHINLNIFFPPNDLCTDNAIMVGWTGIERLQKNYIDPLNFAPRPKWELESY</sequence>
<protein>
    <recommendedName>
        <fullName evidence="1">tRNA N6-adenosine threonylcarbamoyltransferase</fullName>
        <ecNumber evidence="1">2.3.1.234</ecNumber>
    </recommendedName>
    <alternativeName>
        <fullName evidence="1">N6-L-threonylcarbamoyladenine synthase</fullName>
        <shortName evidence="1">t(6)A synthase</shortName>
    </alternativeName>
    <alternativeName>
        <fullName evidence="1">t(6)A37 threonylcarbamoyladenosine biosynthesis protein TsaD</fullName>
    </alternativeName>
    <alternativeName>
        <fullName evidence="1">tRNA threonylcarbamoyladenosine biosynthesis protein TsaD</fullName>
    </alternativeName>
</protein>
<organism>
    <name type="scientific">Wolbachia pipientis wMel</name>
    <dbReference type="NCBI Taxonomy" id="163164"/>
    <lineage>
        <taxon>Bacteria</taxon>
        <taxon>Pseudomonadati</taxon>
        <taxon>Pseudomonadota</taxon>
        <taxon>Alphaproteobacteria</taxon>
        <taxon>Rickettsiales</taxon>
        <taxon>Anaplasmataceae</taxon>
        <taxon>Wolbachieae</taxon>
        <taxon>Wolbachia</taxon>
    </lineage>
</organism>
<evidence type="ECO:0000255" key="1">
    <source>
        <dbReference type="HAMAP-Rule" id="MF_01445"/>
    </source>
</evidence>
<proteinExistence type="inferred from homology"/>
<feature type="chain" id="PRO_0000303612" description="tRNA N6-adenosine threonylcarbamoyltransferase">
    <location>
        <begin position="1"/>
        <end position="335"/>
    </location>
</feature>
<feature type="binding site" evidence="1">
    <location>
        <position position="111"/>
    </location>
    <ligand>
        <name>Fe cation</name>
        <dbReference type="ChEBI" id="CHEBI:24875"/>
    </ligand>
</feature>
<feature type="binding site" evidence="1">
    <location>
        <position position="115"/>
    </location>
    <ligand>
        <name>Fe cation</name>
        <dbReference type="ChEBI" id="CHEBI:24875"/>
    </ligand>
</feature>
<feature type="binding site" evidence="1">
    <location>
        <begin position="133"/>
        <end position="137"/>
    </location>
    <ligand>
        <name>substrate</name>
    </ligand>
</feature>
<feature type="binding site" evidence="1">
    <location>
        <position position="166"/>
    </location>
    <ligand>
        <name>substrate</name>
    </ligand>
</feature>
<feature type="binding site" evidence="1">
    <location>
        <position position="179"/>
    </location>
    <ligand>
        <name>substrate</name>
    </ligand>
</feature>
<feature type="binding site" evidence="1">
    <location>
        <position position="276"/>
    </location>
    <ligand>
        <name>substrate</name>
    </ligand>
</feature>
<feature type="binding site" evidence="1">
    <location>
        <position position="301"/>
    </location>
    <ligand>
        <name>Fe cation</name>
        <dbReference type="ChEBI" id="CHEBI:24875"/>
    </ligand>
</feature>
<gene>
    <name evidence="1" type="primary">tsaD</name>
    <name type="synonym">gcp</name>
    <name type="ordered locus">WD_0699</name>
</gene>
<accession>Q73H71</accession>